<sequence>MSREQLSVEIIEAGRFLYGRGWSPATSSNYSARLSATEALLTVSGKHKGQLGPDDVLATDMAGNSLEPGKKPSAETLLHTQLYSSRPQVGAVLHTHSVNATVLSRLTAADHLVFEDYELQKAFHGVVTHQSQVVVPIFDNDQDIARLAAKVQPWLDAHPECAGYLIRGHGLYTWGAKMSDALRQIEAFEFLFECELKMRAVLNR</sequence>
<accession>Q48KM8</accession>
<protein>
    <recommendedName>
        <fullName evidence="1">Methylthioribulose-1-phosphate dehydratase</fullName>
        <shortName evidence="1">MTRu-1-P dehydratase</shortName>
        <ecNumber evidence="1">4.2.1.109</ecNumber>
    </recommendedName>
</protein>
<dbReference type="EC" id="4.2.1.109" evidence="1"/>
<dbReference type="EMBL" id="CP000058">
    <property type="protein sequence ID" value="AAZ34763.1"/>
    <property type="molecule type" value="Genomic_DNA"/>
</dbReference>
<dbReference type="RefSeq" id="WP_004658442.1">
    <property type="nucleotide sequence ID" value="NC_005773.3"/>
</dbReference>
<dbReference type="SMR" id="Q48KM8"/>
<dbReference type="KEGG" id="psp:PSPPH_1814"/>
<dbReference type="eggNOG" id="COG0235">
    <property type="taxonomic scope" value="Bacteria"/>
</dbReference>
<dbReference type="HOGENOM" id="CLU_006033_4_1_6"/>
<dbReference type="UniPathway" id="UPA00904">
    <property type="reaction ID" value="UER00875"/>
</dbReference>
<dbReference type="Proteomes" id="UP000000551">
    <property type="component" value="Chromosome"/>
</dbReference>
<dbReference type="GO" id="GO:0005737">
    <property type="term" value="C:cytoplasm"/>
    <property type="evidence" value="ECO:0007669"/>
    <property type="project" value="InterPro"/>
</dbReference>
<dbReference type="GO" id="GO:0046570">
    <property type="term" value="F:methylthioribulose 1-phosphate dehydratase activity"/>
    <property type="evidence" value="ECO:0007669"/>
    <property type="project" value="UniProtKB-UniRule"/>
</dbReference>
<dbReference type="GO" id="GO:0008270">
    <property type="term" value="F:zinc ion binding"/>
    <property type="evidence" value="ECO:0007669"/>
    <property type="project" value="UniProtKB-UniRule"/>
</dbReference>
<dbReference type="GO" id="GO:0019509">
    <property type="term" value="P:L-methionine salvage from methylthioadenosine"/>
    <property type="evidence" value="ECO:0007669"/>
    <property type="project" value="UniProtKB-UniRule"/>
</dbReference>
<dbReference type="GO" id="GO:0005996">
    <property type="term" value="P:monosaccharide metabolic process"/>
    <property type="evidence" value="ECO:0007669"/>
    <property type="project" value="UniProtKB-ARBA"/>
</dbReference>
<dbReference type="Gene3D" id="3.40.225.10">
    <property type="entry name" value="Class II aldolase/adducin N-terminal domain"/>
    <property type="match status" value="1"/>
</dbReference>
<dbReference type="HAMAP" id="MF_01677">
    <property type="entry name" value="Salvage_MtnB"/>
    <property type="match status" value="1"/>
</dbReference>
<dbReference type="InterPro" id="IPR001303">
    <property type="entry name" value="Aldolase_II/adducin_N"/>
</dbReference>
<dbReference type="InterPro" id="IPR036409">
    <property type="entry name" value="Aldolase_II/adducin_N_sf"/>
</dbReference>
<dbReference type="InterPro" id="IPR017714">
    <property type="entry name" value="MethylthioRu-1-P_deHdtase_MtnB"/>
</dbReference>
<dbReference type="NCBIfam" id="NF006672">
    <property type="entry name" value="PRK09220.1"/>
    <property type="match status" value="1"/>
</dbReference>
<dbReference type="NCBIfam" id="TIGR03328">
    <property type="entry name" value="salvage_mtnB"/>
    <property type="match status" value="1"/>
</dbReference>
<dbReference type="PANTHER" id="PTHR10640">
    <property type="entry name" value="METHYLTHIORIBULOSE-1-PHOSPHATE DEHYDRATASE"/>
    <property type="match status" value="1"/>
</dbReference>
<dbReference type="PANTHER" id="PTHR10640:SF7">
    <property type="entry name" value="METHYLTHIORIBULOSE-1-PHOSPHATE DEHYDRATASE"/>
    <property type="match status" value="1"/>
</dbReference>
<dbReference type="Pfam" id="PF00596">
    <property type="entry name" value="Aldolase_II"/>
    <property type="match status" value="1"/>
</dbReference>
<dbReference type="SMART" id="SM01007">
    <property type="entry name" value="Aldolase_II"/>
    <property type="match status" value="1"/>
</dbReference>
<dbReference type="SUPFAM" id="SSF53639">
    <property type="entry name" value="AraD/HMP-PK domain-like"/>
    <property type="match status" value="1"/>
</dbReference>
<evidence type="ECO:0000255" key="1">
    <source>
        <dbReference type="HAMAP-Rule" id="MF_01677"/>
    </source>
</evidence>
<comment type="function">
    <text evidence="1">Catalyzes the dehydration of methylthioribulose-1-phosphate (MTRu-1-P) into 2,3-diketo-5-methylthiopentyl-1-phosphate (DK-MTP-1-P).</text>
</comment>
<comment type="catalytic activity">
    <reaction evidence="1">
        <text>5-(methylsulfanyl)-D-ribulose 1-phosphate = 5-methylsulfanyl-2,3-dioxopentyl phosphate + H2O</text>
        <dbReference type="Rhea" id="RHEA:15549"/>
        <dbReference type="ChEBI" id="CHEBI:15377"/>
        <dbReference type="ChEBI" id="CHEBI:58548"/>
        <dbReference type="ChEBI" id="CHEBI:58828"/>
        <dbReference type="EC" id="4.2.1.109"/>
    </reaction>
</comment>
<comment type="cofactor">
    <cofactor evidence="1">
        <name>Zn(2+)</name>
        <dbReference type="ChEBI" id="CHEBI:29105"/>
    </cofactor>
    <text evidence="1">Binds 1 zinc ion per subunit.</text>
</comment>
<comment type="pathway">
    <text evidence="1">Amino-acid biosynthesis; L-methionine biosynthesis via salvage pathway; L-methionine from S-methyl-5-thio-alpha-D-ribose 1-phosphate: step 2/6.</text>
</comment>
<comment type="similarity">
    <text evidence="1">Belongs to the aldolase class II family. MtnB subfamily.</text>
</comment>
<reference key="1">
    <citation type="journal article" date="2005" name="J. Bacteriol.">
        <title>Whole-genome sequence analysis of Pseudomonas syringae pv. phaseolicola 1448A reveals divergence among pathovars in genes involved in virulence and transposition.</title>
        <authorList>
            <person name="Joardar V."/>
            <person name="Lindeberg M."/>
            <person name="Jackson R.W."/>
            <person name="Selengut J."/>
            <person name="Dodson R."/>
            <person name="Brinkac L.M."/>
            <person name="Daugherty S.C."/>
            <person name="DeBoy R.T."/>
            <person name="Durkin A.S."/>
            <person name="Gwinn Giglio M."/>
            <person name="Madupu R."/>
            <person name="Nelson W.C."/>
            <person name="Rosovitz M.J."/>
            <person name="Sullivan S.A."/>
            <person name="Crabtree J."/>
            <person name="Creasy T."/>
            <person name="Davidsen T.M."/>
            <person name="Haft D.H."/>
            <person name="Zafar N."/>
            <person name="Zhou L."/>
            <person name="Halpin R."/>
            <person name="Holley T."/>
            <person name="Khouri H.M."/>
            <person name="Feldblyum T.V."/>
            <person name="White O."/>
            <person name="Fraser C.M."/>
            <person name="Chatterjee A.K."/>
            <person name="Cartinhour S."/>
            <person name="Schneider D."/>
            <person name="Mansfield J.W."/>
            <person name="Collmer A."/>
            <person name="Buell R."/>
        </authorList>
    </citation>
    <scope>NUCLEOTIDE SEQUENCE [LARGE SCALE GENOMIC DNA]</scope>
    <source>
        <strain>1448A / Race 6</strain>
    </source>
</reference>
<keyword id="KW-0028">Amino-acid biosynthesis</keyword>
<keyword id="KW-0456">Lyase</keyword>
<keyword id="KW-0479">Metal-binding</keyword>
<keyword id="KW-0486">Methionine biosynthesis</keyword>
<keyword id="KW-0862">Zinc</keyword>
<name>MTNB_PSE14</name>
<gene>
    <name evidence="1" type="primary">mtnB</name>
    <name type="ordered locus">PSPPH_1814</name>
</gene>
<proteinExistence type="inferred from homology"/>
<organism>
    <name type="scientific">Pseudomonas savastanoi pv. phaseolicola (strain 1448A / Race 6)</name>
    <name type="common">Pseudomonas syringae pv. phaseolicola (strain 1448A / Race 6)</name>
    <dbReference type="NCBI Taxonomy" id="264730"/>
    <lineage>
        <taxon>Bacteria</taxon>
        <taxon>Pseudomonadati</taxon>
        <taxon>Pseudomonadota</taxon>
        <taxon>Gammaproteobacteria</taxon>
        <taxon>Pseudomonadales</taxon>
        <taxon>Pseudomonadaceae</taxon>
        <taxon>Pseudomonas</taxon>
    </lineage>
</organism>
<feature type="chain" id="PRO_0000357101" description="Methylthioribulose-1-phosphate dehydratase">
    <location>
        <begin position="1"/>
        <end position="204"/>
    </location>
</feature>
<feature type="binding site" evidence="1">
    <location>
        <position position="94"/>
    </location>
    <ligand>
        <name>Zn(2+)</name>
        <dbReference type="ChEBI" id="CHEBI:29105"/>
    </ligand>
</feature>
<feature type="binding site" evidence="1">
    <location>
        <position position="96"/>
    </location>
    <ligand>
        <name>Zn(2+)</name>
        <dbReference type="ChEBI" id="CHEBI:29105"/>
    </ligand>
</feature>